<accession>A2IBH5</accession>
<protein>
    <recommendedName>
        <fullName>Beta-crystallin B2</fullName>
    </recommendedName>
    <alternativeName>
        <fullName>Beta-B2 crystallin</fullName>
    </alternativeName>
    <alternativeName>
        <fullName>Beta-crystallin Bp</fullName>
    </alternativeName>
</protein>
<organism>
    <name type="scientific">Oryctolagus cuniculus</name>
    <name type="common">Rabbit</name>
    <dbReference type="NCBI Taxonomy" id="9986"/>
    <lineage>
        <taxon>Eukaryota</taxon>
        <taxon>Metazoa</taxon>
        <taxon>Chordata</taxon>
        <taxon>Craniata</taxon>
        <taxon>Vertebrata</taxon>
        <taxon>Euteleostomi</taxon>
        <taxon>Mammalia</taxon>
        <taxon>Eutheria</taxon>
        <taxon>Euarchontoglires</taxon>
        <taxon>Glires</taxon>
        <taxon>Lagomorpha</taxon>
        <taxon>Leporidae</taxon>
        <taxon>Oryctolagus</taxon>
    </lineage>
</organism>
<reference key="1">
    <citation type="submission" date="2006-12" db="EMBL/GenBank/DDBJ databases">
        <authorList>
            <person name="Wistow G."/>
        </authorList>
    </citation>
    <scope>NUCLEOTIDE SEQUENCE [MRNA]</scope>
    <source>
        <tissue>Lens</tissue>
    </source>
</reference>
<dbReference type="EMBL" id="EF187821">
    <property type="protein sequence ID" value="ABM74184.1"/>
    <property type="molecule type" value="mRNA"/>
</dbReference>
<dbReference type="RefSeq" id="NP_001082786.1">
    <property type="nucleotide sequence ID" value="NM_001089317.1"/>
</dbReference>
<dbReference type="SMR" id="A2IBH5"/>
<dbReference type="FunCoup" id="A2IBH5">
    <property type="interactions" value="5"/>
</dbReference>
<dbReference type="STRING" id="9986.ENSOCUP00000034178"/>
<dbReference type="PaxDb" id="9986-ENSOCUP00000013827"/>
<dbReference type="Ensembl" id="ENSOCUT00000016086.3">
    <property type="protein sequence ID" value="ENSOCUP00000013827.2"/>
    <property type="gene ID" value="ENSOCUG00000016082.3"/>
</dbReference>
<dbReference type="GeneID" id="100037715"/>
<dbReference type="KEGG" id="ocu:100037715"/>
<dbReference type="CTD" id="1415"/>
<dbReference type="eggNOG" id="ENOG502QVM6">
    <property type="taxonomic scope" value="Eukaryota"/>
</dbReference>
<dbReference type="GeneTree" id="ENSGT00940000160048"/>
<dbReference type="HOGENOM" id="CLU_081883_0_1_1"/>
<dbReference type="InParanoid" id="A2IBH5"/>
<dbReference type="OMA" id="FRPIKQD"/>
<dbReference type="OrthoDB" id="8525367at2759"/>
<dbReference type="TreeFam" id="TF331401"/>
<dbReference type="Proteomes" id="UP000001811">
    <property type="component" value="Unplaced"/>
</dbReference>
<dbReference type="Bgee" id="ENSOCUG00000016082">
    <property type="expression patterns" value="Expressed in embryo and 1 other cell type or tissue"/>
</dbReference>
<dbReference type="GO" id="GO:0005212">
    <property type="term" value="F:structural constituent of eye lens"/>
    <property type="evidence" value="ECO:0007669"/>
    <property type="project" value="UniProtKB-KW"/>
</dbReference>
<dbReference type="GO" id="GO:0002088">
    <property type="term" value="P:lens development in camera-type eye"/>
    <property type="evidence" value="ECO:0007669"/>
    <property type="project" value="TreeGrafter"/>
</dbReference>
<dbReference type="GO" id="GO:0007601">
    <property type="term" value="P:visual perception"/>
    <property type="evidence" value="ECO:0007669"/>
    <property type="project" value="TreeGrafter"/>
</dbReference>
<dbReference type="FunFam" id="2.60.20.10:FF:000005">
    <property type="entry name" value="Crystallin, beta B1"/>
    <property type="match status" value="1"/>
</dbReference>
<dbReference type="FunFam" id="2.60.20.10:FF:000002">
    <property type="entry name" value="Crystallin, beta B2"/>
    <property type="match status" value="1"/>
</dbReference>
<dbReference type="Gene3D" id="2.60.20.10">
    <property type="entry name" value="Crystallins"/>
    <property type="match status" value="2"/>
</dbReference>
<dbReference type="InterPro" id="IPR050252">
    <property type="entry name" value="Beta/Gamma-Crystallin"/>
</dbReference>
<dbReference type="InterPro" id="IPR001064">
    <property type="entry name" value="Beta/gamma_crystallin"/>
</dbReference>
<dbReference type="InterPro" id="IPR011024">
    <property type="entry name" value="G_crystallin-like"/>
</dbReference>
<dbReference type="PANTHER" id="PTHR11818:SF11">
    <property type="entry name" value="BETA-CRYSTALLIN B2"/>
    <property type="match status" value="1"/>
</dbReference>
<dbReference type="PANTHER" id="PTHR11818">
    <property type="entry name" value="BETA/GAMMA CRYSTALLIN"/>
    <property type="match status" value="1"/>
</dbReference>
<dbReference type="Pfam" id="PF00030">
    <property type="entry name" value="Crystall"/>
    <property type="match status" value="2"/>
</dbReference>
<dbReference type="PRINTS" id="PR01367">
    <property type="entry name" value="BGCRYSTALLIN"/>
</dbReference>
<dbReference type="SMART" id="SM00247">
    <property type="entry name" value="XTALbg"/>
    <property type="match status" value="2"/>
</dbReference>
<dbReference type="SUPFAM" id="SSF49695">
    <property type="entry name" value="gamma-Crystallin-like"/>
    <property type="match status" value="1"/>
</dbReference>
<dbReference type="PROSITE" id="PS50915">
    <property type="entry name" value="CRYSTALLIN_BETA_GAMMA"/>
    <property type="match status" value="4"/>
</dbReference>
<gene>
    <name type="primary">CRYBB2</name>
</gene>
<evidence type="ECO:0000250" key="1"/>
<evidence type="ECO:0000250" key="2">
    <source>
        <dbReference type="UniProtKB" id="P02522"/>
    </source>
</evidence>
<evidence type="ECO:0000255" key="3">
    <source>
        <dbReference type="PROSITE-ProRule" id="PRU00028"/>
    </source>
</evidence>
<evidence type="ECO:0000305" key="4"/>
<sequence>MASDHQTQAGKPQPLNPKIIIFEQENFQGHSHELNGPCPNLKETGVEKAGSVLVQAGPWVGYEQANCKGEQFVFEKGEYPRWDSWTSSRRTDSLSSLRPIKVDSQEHKIILYENPNFTGKKMEIIDDDVPSFHAHGYQEKVSSVRVQSGTWVGYQYPGYRGLQYLLEKGDYKDSSDFGAPHPQVQSVRRIRDMQWHQRGAFHPTN</sequence>
<proteinExistence type="evidence at transcript level"/>
<feature type="initiator methionine" description="Removed" evidence="2">
    <location>
        <position position="1"/>
    </location>
</feature>
<feature type="chain" id="PRO_0000289605" description="Beta-crystallin B2">
    <location>
        <begin position="2"/>
        <end position="205"/>
    </location>
</feature>
<feature type="domain" description="Beta/gamma crystallin 'Greek key' 1" evidence="3">
    <location>
        <begin position="17"/>
        <end position="56"/>
    </location>
</feature>
<feature type="domain" description="Beta/gamma crystallin 'Greek key' 2" evidence="3">
    <location>
        <begin position="57"/>
        <end position="101"/>
    </location>
</feature>
<feature type="domain" description="Beta/gamma crystallin 'Greek key' 3" evidence="3">
    <location>
        <begin position="107"/>
        <end position="148"/>
    </location>
</feature>
<feature type="domain" description="Beta/gamma crystallin 'Greek key' 4" evidence="3">
    <location>
        <begin position="149"/>
        <end position="191"/>
    </location>
</feature>
<feature type="region of interest" description="N-terminal arm">
    <location>
        <begin position="2"/>
        <end position="16"/>
    </location>
</feature>
<feature type="region of interest" description="Connecting peptide">
    <location>
        <begin position="102"/>
        <end position="106"/>
    </location>
</feature>
<feature type="region of interest" description="C-terminal arm">
    <location>
        <begin position="193"/>
        <end position="205"/>
    </location>
</feature>
<feature type="modified residue" description="N-acetylalanine" evidence="2">
    <location>
        <position position="2"/>
    </location>
</feature>
<name>CRBB2_RABIT</name>
<keyword id="KW-0007">Acetylation</keyword>
<keyword id="KW-0273">Eye lens protein</keyword>
<keyword id="KW-1185">Reference proteome</keyword>
<keyword id="KW-0677">Repeat</keyword>
<comment type="function">
    <text evidence="1">Crystallins are the dominant structural components of the vertebrate eye lens.</text>
</comment>
<comment type="subunit">
    <text evidence="1">Homo/heterodimer, or complexes of higher-order. The structure of beta-crystallin oligomers seems to be stabilized through interactions between the N-terminal arms (By similarity).</text>
</comment>
<comment type="domain">
    <text>Has a two-domain beta-structure, folded into four very similar Greek key motifs.</text>
</comment>
<comment type="similarity">
    <text evidence="4">Belongs to the beta/gamma-crystallin family.</text>
</comment>